<reference key="1">
    <citation type="journal article" date="2003" name="Microbiology">
        <title>The complete genome sequence of the avian pathogen Mycoplasma gallisepticum strain R(low).</title>
        <authorList>
            <person name="Papazisi L."/>
            <person name="Gorton T.S."/>
            <person name="Kutish G."/>
            <person name="Markham P.F."/>
            <person name="Browning G.F."/>
            <person name="Nguyen D.K."/>
            <person name="Swartzell S."/>
            <person name="Madan A."/>
            <person name="Mahairas G."/>
            <person name="Geary S.J."/>
        </authorList>
    </citation>
    <scope>NUCLEOTIDE SEQUENCE [LARGE SCALE GENOMIC DNA]</scope>
    <source>
        <strain>R(low / passage 15 / clone 2)</strain>
    </source>
</reference>
<evidence type="ECO:0000255" key="1">
    <source>
        <dbReference type="HAMAP-Rule" id="MF_00040"/>
    </source>
</evidence>
<protein>
    <recommendedName>
        <fullName evidence="1">Ribosome-recycling factor</fullName>
        <shortName evidence="1">RRF</shortName>
    </recommendedName>
    <alternativeName>
        <fullName evidence="1">Ribosome-releasing factor</fullName>
    </alternativeName>
</protein>
<accession>Q7NC19</accession>
<keyword id="KW-0963">Cytoplasm</keyword>
<keyword id="KW-0648">Protein biosynthesis</keyword>
<keyword id="KW-1185">Reference proteome</keyword>
<sequence>MEFKTYSDFFDKNANSIINWFEGELAKVRSGRANLKILDNVRAEYYGEQTPLIEMASLSIPEPREILIKPYEKSSVNLIQAALLKANLNLTPVVDGDKIRIKLPLLTEENRKENVKKVKAVGEKAKQEVRFIRRDTLNKIKSDKIADKDLNKYFEEQVDKITKKYIDQIDSILAKKEKDLLSL</sequence>
<gene>
    <name evidence="1" type="primary">frr</name>
    <name type="ordered locus">MYCGA0900</name>
    <name type="ORF">MGA_0784</name>
</gene>
<feature type="chain" id="PRO_0000167491" description="Ribosome-recycling factor">
    <location>
        <begin position="1"/>
        <end position="183"/>
    </location>
</feature>
<comment type="function">
    <text evidence="1">Responsible for the release of ribosomes from messenger RNA at the termination of protein biosynthesis. May increase the efficiency of translation by recycling ribosomes from one round of translation to another.</text>
</comment>
<comment type="subcellular location">
    <subcellularLocation>
        <location evidence="1">Cytoplasm</location>
    </subcellularLocation>
</comment>
<comment type="similarity">
    <text evidence="1">Belongs to the RRF family.</text>
</comment>
<name>RRF_MYCGA</name>
<organism>
    <name type="scientific">Mycoplasmoides gallisepticum (strain R(low / passage 15 / clone 2))</name>
    <name type="common">Mycoplasma gallisepticum</name>
    <dbReference type="NCBI Taxonomy" id="710127"/>
    <lineage>
        <taxon>Bacteria</taxon>
        <taxon>Bacillati</taxon>
        <taxon>Mycoplasmatota</taxon>
        <taxon>Mycoplasmoidales</taxon>
        <taxon>Mycoplasmoidaceae</taxon>
        <taxon>Mycoplasmoides</taxon>
    </lineage>
</organism>
<proteinExistence type="inferred from homology"/>
<dbReference type="EMBL" id="AE015450">
    <property type="protein sequence ID" value="AAP56440.2"/>
    <property type="molecule type" value="Genomic_DNA"/>
</dbReference>
<dbReference type="RefSeq" id="WP_011113319.1">
    <property type="nucleotide sequence ID" value="NC_004829.2"/>
</dbReference>
<dbReference type="SMR" id="Q7NC19"/>
<dbReference type="GeneID" id="93509910"/>
<dbReference type="KEGG" id="mga:MGA_0784"/>
<dbReference type="PATRIC" id="fig|233150.7.peg.94"/>
<dbReference type="HOGENOM" id="CLU_073981_2_0_14"/>
<dbReference type="OrthoDB" id="9804006at2"/>
<dbReference type="Proteomes" id="UP000001418">
    <property type="component" value="Chromosome"/>
</dbReference>
<dbReference type="GO" id="GO:0005737">
    <property type="term" value="C:cytoplasm"/>
    <property type="evidence" value="ECO:0007669"/>
    <property type="project" value="UniProtKB-SubCell"/>
</dbReference>
<dbReference type="GO" id="GO:0043023">
    <property type="term" value="F:ribosomal large subunit binding"/>
    <property type="evidence" value="ECO:0007669"/>
    <property type="project" value="TreeGrafter"/>
</dbReference>
<dbReference type="GO" id="GO:0006415">
    <property type="term" value="P:translational termination"/>
    <property type="evidence" value="ECO:0007669"/>
    <property type="project" value="UniProtKB-UniRule"/>
</dbReference>
<dbReference type="CDD" id="cd00520">
    <property type="entry name" value="RRF"/>
    <property type="match status" value="1"/>
</dbReference>
<dbReference type="FunFam" id="3.30.1360.40:FF:000001">
    <property type="entry name" value="Ribosome-recycling factor"/>
    <property type="match status" value="1"/>
</dbReference>
<dbReference type="Gene3D" id="3.30.1360.40">
    <property type="match status" value="1"/>
</dbReference>
<dbReference type="Gene3D" id="1.10.132.20">
    <property type="entry name" value="Ribosome-recycling factor"/>
    <property type="match status" value="1"/>
</dbReference>
<dbReference type="HAMAP" id="MF_00040">
    <property type="entry name" value="RRF"/>
    <property type="match status" value="1"/>
</dbReference>
<dbReference type="InterPro" id="IPR002661">
    <property type="entry name" value="Ribosome_recyc_fac"/>
</dbReference>
<dbReference type="InterPro" id="IPR023584">
    <property type="entry name" value="Ribosome_recyc_fac_dom"/>
</dbReference>
<dbReference type="InterPro" id="IPR036191">
    <property type="entry name" value="RRF_sf"/>
</dbReference>
<dbReference type="NCBIfam" id="TIGR00496">
    <property type="entry name" value="frr"/>
    <property type="match status" value="1"/>
</dbReference>
<dbReference type="PANTHER" id="PTHR20982:SF3">
    <property type="entry name" value="MITOCHONDRIAL RIBOSOME RECYCLING FACTOR PSEUDO 1"/>
    <property type="match status" value="1"/>
</dbReference>
<dbReference type="PANTHER" id="PTHR20982">
    <property type="entry name" value="RIBOSOME RECYCLING FACTOR"/>
    <property type="match status" value="1"/>
</dbReference>
<dbReference type="Pfam" id="PF01765">
    <property type="entry name" value="RRF"/>
    <property type="match status" value="1"/>
</dbReference>
<dbReference type="SUPFAM" id="SSF55194">
    <property type="entry name" value="Ribosome recycling factor, RRF"/>
    <property type="match status" value="1"/>
</dbReference>